<feature type="chain" id="PRO_0000329288" description="Prolyl-tRNA synthetase associated domain-containing protein 1">
    <location>
        <begin position="1"/>
        <end position="184"/>
    </location>
</feature>
<keyword id="KW-1185">Reference proteome</keyword>
<gene>
    <name type="primary">Prorsd1</name>
    <name type="synonym">prdxdd1</name>
    <name type="ORF">zgc:64201</name>
</gene>
<dbReference type="EMBL" id="BC057440">
    <property type="protein sequence ID" value="AAH57440.1"/>
    <property type="molecule type" value="mRNA"/>
</dbReference>
<dbReference type="RefSeq" id="NP_956936.1">
    <property type="nucleotide sequence ID" value="NM_200642.1"/>
</dbReference>
<dbReference type="SMR" id="Q6PFS2"/>
<dbReference type="FunCoup" id="Q6PFS2">
    <property type="interactions" value="47"/>
</dbReference>
<dbReference type="GeneID" id="393615"/>
<dbReference type="KEGG" id="dre:393615"/>
<dbReference type="AGR" id="ZFIN:ZDB-GENE-040426-1402"/>
<dbReference type="CTD" id="67939"/>
<dbReference type="ZFIN" id="ZDB-GENE-040426-1402">
    <property type="gene designation" value="prorsd1"/>
</dbReference>
<dbReference type="InParanoid" id="Q6PFS2"/>
<dbReference type="OrthoDB" id="424586at2759"/>
<dbReference type="PhylomeDB" id="Q6PFS2"/>
<dbReference type="PRO" id="PR:Q6PFS2"/>
<dbReference type="Proteomes" id="UP000000437">
    <property type="component" value="Chromosome 13"/>
</dbReference>
<dbReference type="GO" id="GO:0002161">
    <property type="term" value="F:aminoacyl-tRNA deacylase activity"/>
    <property type="evidence" value="ECO:0007669"/>
    <property type="project" value="InterPro"/>
</dbReference>
<dbReference type="CDD" id="cd04335">
    <property type="entry name" value="PrdX_deacylase"/>
    <property type="match status" value="1"/>
</dbReference>
<dbReference type="FunFam" id="3.90.960.10:FF:000005">
    <property type="entry name" value="Putative prolyl-tRNA synthetase"/>
    <property type="match status" value="1"/>
</dbReference>
<dbReference type="Gene3D" id="3.90.960.10">
    <property type="entry name" value="YbaK/aminoacyl-tRNA synthetase-associated domain"/>
    <property type="match status" value="1"/>
</dbReference>
<dbReference type="InterPro" id="IPR040285">
    <property type="entry name" value="ProX/PRXD1"/>
</dbReference>
<dbReference type="InterPro" id="IPR036754">
    <property type="entry name" value="YbaK/aa-tRNA-synt-asso_dom_sf"/>
</dbReference>
<dbReference type="InterPro" id="IPR007214">
    <property type="entry name" value="YbaK/aa-tRNA-synth-assoc-dom"/>
</dbReference>
<dbReference type="PANTHER" id="PTHR31423:SF3">
    <property type="entry name" value="PROLYL-TRNA SYNTHETASE ASSOCIATED DOMAIN-CONTAINING PROTEIN 1-RELATED"/>
    <property type="match status" value="1"/>
</dbReference>
<dbReference type="PANTHER" id="PTHR31423">
    <property type="entry name" value="YBAK DOMAIN-CONTAINING PROTEIN"/>
    <property type="match status" value="1"/>
</dbReference>
<dbReference type="Pfam" id="PF04073">
    <property type="entry name" value="tRNA_edit"/>
    <property type="match status" value="1"/>
</dbReference>
<dbReference type="SUPFAM" id="SSF55826">
    <property type="entry name" value="YbaK/ProRS associated domain"/>
    <property type="match status" value="1"/>
</dbReference>
<accession>Q6PFS2</accession>
<name>PRXD1_DANRE</name>
<reference key="1">
    <citation type="submission" date="2003-09" db="EMBL/GenBank/DDBJ databases">
        <authorList>
            <consortium name="NIH - Zebrafish Gene Collection (ZGC) project"/>
        </authorList>
    </citation>
    <scope>NUCLEOTIDE SEQUENCE [LARGE SCALE MRNA]</scope>
    <source>
        <tissue>Embryo</tissue>
    </source>
</reference>
<sequence length="184" mass="20715">MDQSELVEAVSEAGGAAVAPVDLRKELEEFLKRLNIETTCIEHPEVFTVEEMMPHVSHLSGVVTKNLFLKDKKRRVFLVCVRHDRPLALGELSRRLGAPNLRLAEERLLLEKLRVRQGCVTPLALFLDTERSVTAVLDRELTHGGHTHIHCHPMTNSATMGITPADLLRFLEETQHTPVILSFD</sequence>
<proteinExistence type="evidence at transcript level"/>
<protein>
    <recommendedName>
        <fullName>Prolyl-tRNA synthetase associated domain-containing protein 1</fullName>
    </recommendedName>
    <alternativeName>
        <fullName>PrdX deacylase domain-containing protein 1</fullName>
    </alternativeName>
</protein>
<evidence type="ECO:0000305" key="1"/>
<comment type="similarity">
    <text evidence="1">Belongs to the PRORSD1 family.</text>
</comment>
<organism>
    <name type="scientific">Danio rerio</name>
    <name type="common">Zebrafish</name>
    <name type="synonym">Brachydanio rerio</name>
    <dbReference type="NCBI Taxonomy" id="7955"/>
    <lineage>
        <taxon>Eukaryota</taxon>
        <taxon>Metazoa</taxon>
        <taxon>Chordata</taxon>
        <taxon>Craniata</taxon>
        <taxon>Vertebrata</taxon>
        <taxon>Euteleostomi</taxon>
        <taxon>Actinopterygii</taxon>
        <taxon>Neopterygii</taxon>
        <taxon>Teleostei</taxon>
        <taxon>Ostariophysi</taxon>
        <taxon>Cypriniformes</taxon>
        <taxon>Danionidae</taxon>
        <taxon>Danioninae</taxon>
        <taxon>Danio</taxon>
    </lineage>
</organism>